<feature type="chain" id="PRO_1000011552" description="GTPase Der">
    <location>
        <begin position="1"/>
        <end position="499"/>
    </location>
</feature>
<feature type="domain" description="EngA-type G 1">
    <location>
        <begin position="3"/>
        <end position="166"/>
    </location>
</feature>
<feature type="domain" description="EngA-type G 2">
    <location>
        <begin position="213"/>
        <end position="386"/>
    </location>
</feature>
<feature type="domain" description="KH-like" evidence="1">
    <location>
        <begin position="387"/>
        <end position="471"/>
    </location>
</feature>
<feature type="binding site" evidence="1">
    <location>
        <begin position="9"/>
        <end position="16"/>
    </location>
    <ligand>
        <name>GTP</name>
        <dbReference type="ChEBI" id="CHEBI:37565"/>
        <label>1</label>
    </ligand>
</feature>
<feature type="binding site" evidence="1">
    <location>
        <begin position="56"/>
        <end position="60"/>
    </location>
    <ligand>
        <name>GTP</name>
        <dbReference type="ChEBI" id="CHEBI:37565"/>
        <label>1</label>
    </ligand>
</feature>
<feature type="binding site" evidence="1">
    <location>
        <begin position="118"/>
        <end position="121"/>
    </location>
    <ligand>
        <name>GTP</name>
        <dbReference type="ChEBI" id="CHEBI:37565"/>
        <label>1</label>
    </ligand>
</feature>
<feature type="binding site" evidence="1">
    <location>
        <begin position="219"/>
        <end position="226"/>
    </location>
    <ligand>
        <name>GTP</name>
        <dbReference type="ChEBI" id="CHEBI:37565"/>
        <label>2</label>
    </ligand>
</feature>
<feature type="binding site" evidence="1">
    <location>
        <begin position="266"/>
        <end position="270"/>
    </location>
    <ligand>
        <name>GTP</name>
        <dbReference type="ChEBI" id="CHEBI:37565"/>
        <label>2</label>
    </ligand>
</feature>
<feature type="binding site" evidence="1">
    <location>
        <begin position="331"/>
        <end position="334"/>
    </location>
    <ligand>
        <name>GTP</name>
        <dbReference type="ChEBI" id="CHEBI:37565"/>
        <label>2</label>
    </ligand>
</feature>
<reference key="1">
    <citation type="journal article" date="2006" name="J. Bacteriol.">
        <title>Genome sequence of Aeromonas hydrophila ATCC 7966T: jack of all trades.</title>
        <authorList>
            <person name="Seshadri R."/>
            <person name="Joseph S.W."/>
            <person name="Chopra A.K."/>
            <person name="Sha J."/>
            <person name="Shaw J."/>
            <person name="Graf J."/>
            <person name="Haft D.H."/>
            <person name="Wu M."/>
            <person name="Ren Q."/>
            <person name="Rosovitz M.J."/>
            <person name="Madupu R."/>
            <person name="Tallon L."/>
            <person name="Kim M."/>
            <person name="Jin S."/>
            <person name="Vuong H."/>
            <person name="Stine O.C."/>
            <person name="Ali A."/>
            <person name="Horneman A.J."/>
            <person name="Heidelberg J.F."/>
        </authorList>
    </citation>
    <scope>NUCLEOTIDE SEQUENCE [LARGE SCALE GENOMIC DNA]</scope>
    <source>
        <strain>ATCC 7966 / DSM 30187 / BCRC 13018 / CCUG 14551 / JCM 1027 / KCTC 2358 / NCIMB 9240 / NCTC 8049</strain>
    </source>
</reference>
<evidence type="ECO:0000255" key="1">
    <source>
        <dbReference type="HAMAP-Rule" id="MF_00195"/>
    </source>
</evidence>
<proteinExistence type="inferred from homology"/>
<name>DER_AERHH</name>
<protein>
    <recommendedName>
        <fullName evidence="1">GTPase Der</fullName>
    </recommendedName>
    <alternativeName>
        <fullName evidence="1">GTP-binding protein EngA</fullName>
    </alternativeName>
</protein>
<comment type="function">
    <text evidence="1">GTPase that plays an essential role in the late steps of ribosome biogenesis.</text>
</comment>
<comment type="subunit">
    <text evidence="1">Associates with the 50S ribosomal subunit.</text>
</comment>
<comment type="similarity">
    <text evidence="1">Belongs to the TRAFAC class TrmE-Era-EngA-EngB-Septin-like GTPase superfamily. EngA (Der) GTPase family.</text>
</comment>
<keyword id="KW-0342">GTP-binding</keyword>
<keyword id="KW-0547">Nucleotide-binding</keyword>
<keyword id="KW-1185">Reference proteome</keyword>
<keyword id="KW-0677">Repeat</keyword>
<keyword id="KW-0690">Ribosome biogenesis</keyword>
<dbReference type="EMBL" id="CP000462">
    <property type="protein sequence ID" value="ABK39119.1"/>
    <property type="molecule type" value="Genomic_DNA"/>
</dbReference>
<dbReference type="RefSeq" id="WP_011705649.1">
    <property type="nucleotide sequence ID" value="NC_008570.1"/>
</dbReference>
<dbReference type="RefSeq" id="YP_856299.1">
    <property type="nucleotide sequence ID" value="NC_008570.1"/>
</dbReference>
<dbReference type="SMR" id="A0KJ48"/>
<dbReference type="STRING" id="380703.AHA_1763"/>
<dbReference type="EnsemblBacteria" id="ABK39119">
    <property type="protein sequence ID" value="ABK39119"/>
    <property type="gene ID" value="AHA_1763"/>
</dbReference>
<dbReference type="GeneID" id="4490293"/>
<dbReference type="KEGG" id="aha:AHA_1763"/>
<dbReference type="PATRIC" id="fig|380703.7.peg.1779"/>
<dbReference type="eggNOG" id="COG1160">
    <property type="taxonomic scope" value="Bacteria"/>
</dbReference>
<dbReference type="HOGENOM" id="CLU_016077_5_0_6"/>
<dbReference type="OrthoDB" id="9805918at2"/>
<dbReference type="Proteomes" id="UP000000756">
    <property type="component" value="Chromosome"/>
</dbReference>
<dbReference type="GO" id="GO:0005525">
    <property type="term" value="F:GTP binding"/>
    <property type="evidence" value="ECO:0007669"/>
    <property type="project" value="UniProtKB-UniRule"/>
</dbReference>
<dbReference type="GO" id="GO:0043022">
    <property type="term" value="F:ribosome binding"/>
    <property type="evidence" value="ECO:0007669"/>
    <property type="project" value="TreeGrafter"/>
</dbReference>
<dbReference type="GO" id="GO:0042254">
    <property type="term" value="P:ribosome biogenesis"/>
    <property type="evidence" value="ECO:0007669"/>
    <property type="project" value="UniProtKB-KW"/>
</dbReference>
<dbReference type="CDD" id="cd01894">
    <property type="entry name" value="EngA1"/>
    <property type="match status" value="1"/>
</dbReference>
<dbReference type="CDD" id="cd01895">
    <property type="entry name" value="EngA2"/>
    <property type="match status" value="1"/>
</dbReference>
<dbReference type="FunFam" id="3.30.300.20:FF:000004">
    <property type="entry name" value="GTPase Der"/>
    <property type="match status" value="1"/>
</dbReference>
<dbReference type="FunFam" id="3.40.50.300:FF:000040">
    <property type="entry name" value="GTPase Der"/>
    <property type="match status" value="1"/>
</dbReference>
<dbReference type="FunFam" id="3.40.50.300:FF:000057">
    <property type="entry name" value="GTPase Der"/>
    <property type="match status" value="1"/>
</dbReference>
<dbReference type="Gene3D" id="3.30.300.20">
    <property type="match status" value="1"/>
</dbReference>
<dbReference type="Gene3D" id="3.40.50.300">
    <property type="entry name" value="P-loop containing nucleotide triphosphate hydrolases"/>
    <property type="match status" value="2"/>
</dbReference>
<dbReference type="HAMAP" id="MF_00195">
    <property type="entry name" value="GTPase_Der"/>
    <property type="match status" value="1"/>
</dbReference>
<dbReference type="InterPro" id="IPR031166">
    <property type="entry name" value="G_ENGA"/>
</dbReference>
<dbReference type="InterPro" id="IPR006073">
    <property type="entry name" value="GTP-bd"/>
</dbReference>
<dbReference type="InterPro" id="IPR016484">
    <property type="entry name" value="GTPase_Der"/>
</dbReference>
<dbReference type="InterPro" id="IPR032859">
    <property type="entry name" value="KH_dom-like"/>
</dbReference>
<dbReference type="InterPro" id="IPR015946">
    <property type="entry name" value="KH_dom-like_a/b"/>
</dbReference>
<dbReference type="InterPro" id="IPR027417">
    <property type="entry name" value="P-loop_NTPase"/>
</dbReference>
<dbReference type="InterPro" id="IPR005225">
    <property type="entry name" value="Small_GTP-bd"/>
</dbReference>
<dbReference type="NCBIfam" id="TIGR03594">
    <property type="entry name" value="GTPase_EngA"/>
    <property type="match status" value="1"/>
</dbReference>
<dbReference type="NCBIfam" id="TIGR00231">
    <property type="entry name" value="small_GTP"/>
    <property type="match status" value="2"/>
</dbReference>
<dbReference type="PANTHER" id="PTHR43834">
    <property type="entry name" value="GTPASE DER"/>
    <property type="match status" value="1"/>
</dbReference>
<dbReference type="PANTHER" id="PTHR43834:SF6">
    <property type="entry name" value="GTPASE DER"/>
    <property type="match status" value="1"/>
</dbReference>
<dbReference type="Pfam" id="PF14714">
    <property type="entry name" value="KH_dom-like"/>
    <property type="match status" value="1"/>
</dbReference>
<dbReference type="Pfam" id="PF01926">
    <property type="entry name" value="MMR_HSR1"/>
    <property type="match status" value="2"/>
</dbReference>
<dbReference type="PIRSF" id="PIRSF006485">
    <property type="entry name" value="GTP-binding_EngA"/>
    <property type="match status" value="1"/>
</dbReference>
<dbReference type="PRINTS" id="PR00326">
    <property type="entry name" value="GTP1OBG"/>
</dbReference>
<dbReference type="SUPFAM" id="SSF52540">
    <property type="entry name" value="P-loop containing nucleoside triphosphate hydrolases"/>
    <property type="match status" value="2"/>
</dbReference>
<dbReference type="PROSITE" id="PS51712">
    <property type="entry name" value="G_ENGA"/>
    <property type="match status" value="2"/>
</dbReference>
<organism>
    <name type="scientific">Aeromonas hydrophila subsp. hydrophila (strain ATCC 7966 / DSM 30187 / BCRC 13018 / CCUG 14551 / JCM 1027 / KCTC 2358 / NCIMB 9240 / NCTC 8049)</name>
    <dbReference type="NCBI Taxonomy" id="380703"/>
    <lineage>
        <taxon>Bacteria</taxon>
        <taxon>Pseudomonadati</taxon>
        <taxon>Pseudomonadota</taxon>
        <taxon>Gammaproteobacteria</taxon>
        <taxon>Aeromonadales</taxon>
        <taxon>Aeromonadaceae</taxon>
        <taxon>Aeromonas</taxon>
    </lineage>
</organism>
<sequence>MTPVVALVGRPNVGKSTLFNRLTRTRDALVADFPGLTRDRKYGQAKLGELEFIVVDTGGIDGTEEGIELKMAEQSLLAIEEADVVLFMVDARAGLTAADQAIAEHLRKTHKKVFLVANKTDGIDGDSAVSEFYGLALGEVYQMAAAHGRGVLSLLELALAPHLETLVDAATQETAQDEEEEDFDEEALLRMVAAGELDTKEDTKETPFADLPIKFAIVGRPNVGKSTLTNRMLGEDRVIVYDMPGTTRDSVYIPMERDEQKYVIIDTAGVRRRGKVHETVEKFSVIKTLKAIEDANVCLLVIDAQETITDQDLSILGFVLNTGRSVVLVVNKWDGLDQKVKEDVKNELDRRLGFIDFARVHFISALHGSGVGHLFESIQEAYQSATRRTSTAMLTRIMQMAQEDHQPPMVNGRRVKLKYAHAGGYNPPRIVIHGNQLNDLPDSYKRYLINYFRKSLKIMGTPVRVEFQESANPFEGKKNTLTLSQERQRKRLLKAKAKK</sequence>
<gene>
    <name evidence="1" type="primary">der</name>
    <name type="synonym">engA</name>
    <name type="ordered locus">AHA_1763</name>
</gene>
<accession>A0KJ48</accession>